<gene>
    <name evidence="2" type="primary">rpsL</name>
    <name type="ordered locus">ECIAI1_3478</name>
</gene>
<proteinExistence type="inferred from homology"/>
<protein>
    <recommendedName>
        <fullName evidence="2">Small ribosomal subunit protein uS12</fullName>
    </recommendedName>
    <alternativeName>
        <fullName evidence="3">30S ribosomal protein S12</fullName>
    </alternativeName>
</protein>
<accession>B7M1P3</accession>
<keyword id="KW-0007">Acetylation</keyword>
<keyword id="KW-0488">Methylation</keyword>
<keyword id="KW-0687">Ribonucleoprotein</keyword>
<keyword id="KW-0689">Ribosomal protein</keyword>
<keyword id="KW-0694">RNA-binding</keyword>
<keyword id="KW-0699">rRNA-binding</keyword>
<keyword id="KW-0820">tRNA-binding</keyword>
<organism>
    <name type="scientific">Escherichia coli O8 (strain IAI1)</name>
    <dbReference type="NCBI Taxonomy" id="585034"/>
    <lineage>
        <taxon>Bacteria</taxon>
        <taxon>Pseudomonadati</taxon>
        <taxon>Pseudomonadota</taxon>
        <taxon>Gammaproteobacteria</taxon>
        <taxon>Enterobacterales</taxon>
        <taxon>Enterobacteriaceae</taxon>
        <taxon>Escherichia</taxon>
    </lineage>
</organism>
<sequence>MATVNQLVRKPRARKVAKSNVPALEACPQKRGVCTRVYTTTPKKPNSALRKVCRVRLTNGFEVTSYIGGEGHNLQEHSVILIRGGRVKDLPGVRYHTVRGALDCSGVKDRKQARSKYGVKRPKA</sequence>
<feature type="chain" id="PRO_1000194167" description="Small ribosomal subunit protein uS12">
    <location>
        <begin position="1"/>
        <end position="124"/>
    </location>
</feature>
<feature type="modified residue" description="3-methylthioaspartic acid" evidence="1">
    <location>
        <position position="89"/>
    </location>
</feature>
<feature type="modified residue" description="N6-acetyllysine" evidence="2">
    <location>
        <position position="108"/>
    </location>
</feature>
<evidence type="ECO:0000250" key="1"/>
<evidence type="ECO:0000255" key="2">
    <source>
        <dbReference type="HAMAP-Rule" id="MF_00403"/>
    </source>
</evidence>
<evidence type="ECO:0000305" key="3"/>
<name>RS12_ECO8A</name>
<reference key="1">
    <citation type="journal article" date="2009" name="PLoS Genet.">
        <title>Organised genome dynamics in the Escherichia coli species results in highly diverse adaptive paths.</title>
        <authorList>
            <person name="Touchon M."/>
            <person name="Hoede C."/>
            <person name="Tenaillon O."/>
            <person name="Barbe V."/>
            <person name="Baeriswyl S."/>
            <person name="Bidet P."/>
            <person name="Bingen E."/>
            <person name="Bonacorsi S."/>
            <person name="Bouchier C."/>
            <person name="Bouvet O."/>
            <person name="Calteau A."/>
            <person name="Chiapello H."/>
            <person name="Clermont O."/>
            <person name="Cruveiller S."/>
            <person name="Danchin A."/>
            <person name="Diard M."/>
            <person name="Dossat C."/>
            <person name="Karoui M.E."/>
            <person name="Frapy E."/>
            <person name="Garry L."/>
            <person name="Ghigo J.M."/>
            <person name="Gilles A.M."/>
            <person name="Johnson J."/>
            <person name="Le Bouguenec C."/>
            <person name="Lescat M."/>
            <person name="Mangenot S."/>
            <person name="Martinez-Jehanne V."/>
            <person name="Matic I."/>
            <person name="Nassif X."/>
            <person name="Oztas S."/>
            <person name="Petit M.A."/>
            <person name="Pichon C."/>
            <person name="Rouy Z."/>
            <person name="Ruf C.S."/>
            <person name="Schneider D."/>
            <person name="Tourret J."/>
            <person name="Vacherie B."/>
            <person name="Vallenet D."/>
            <person name="Medigue C."/>
            <person name="Rocha E.P.C."/>
            <person name="Denamur E."/>
        </authorList>
    </citation>
    <scope>NUCLEOTIDE SEQUENCE [LARGE SCALE GENOMIC DNA]</scope>
    <source>
        <strain>IAI1</strain>
    </source>
</reference>
<dbReference type="EMBL" id="CU928160">
    <property type="protein sequence ID" value="CAR00280.1"/>
    <property type="molecule type" value="Genomic_DNA"/>
</dbReference>
<dbReference type="RefSeq" id="WP_000246815.1">
    <property type="nucleotide sequence ID" value="NC_011741.1"/>
</dbReference>
<dbReference type="SMR" id="B7M1P3"/>
<dbReference type="GeneID" id="98390450"/>
<dbReference type="KEGG" id="ecr:ECIAI1_3478"/>
<dbReference type="HOGENOM" id="CLU_104295_1_2_6"/>
<dbReference type="GO" id="GO:0015935">
    <property type="term" value="C:small ribosomal subunit"/>
    <property type="evidence" value="ECO:0007669"/>
    <property type="project" value="InterPro"/>
</dbReference>
<dbReference type="GO" id="GO:0019843">
    <property type="term" value="F:rRNA binding"/>
    <property type="evidence" value="ECO:0007669"/>
    <property type="project" value="UniProtKB-UniRule"/>
</dbReference>
<dbReference type="GO" id="GO:0003735">
    <property type="term" value="F:structural constituent of ribosome"/>
    <property type="evidence" value="ECO:0007669"/>
    <property type="project" value="InterPro"/>
</dbReference>
<dbReference type="GO" id="GO:0000049">
    <property type="term" value="F:tRNA binding"/>
    <property type="evidence" value="ECO:0007669"/>
    <property type="project" value="UniProtKB-UniRule"/>
</dbReference>
<dbReference type="GO" id="GO:0006412">
    <property type="term" value="P:translation"/>
    <property type="evidence" value="ECO:0007669"/>
    <property type="project" value="UniProtKB-UniRule"/>
</dbReference>
<dbReference type="CDD" id="cd03368">
    <property type="entry name" value="Ribosomal_S12"/>
    <property type="match status" value="1"/>
</dbReference>
<dbReference type="FunFam" id="2.40.50.140:FF:000001">
    <property type="entry name" value="30S ribosomal protein S12"/>
    <property type="match status" value="1"/>
</dbReference>
<dbReference type="Gene3D" id="2.40.50.140">
    <property type="entry name" value="Nucleic acid-binding proteins"/>
    <property type="match status" value="1"/>
</dbReference>
<dbReference type="HAMAP" id="MF_00403_B">
    <property type="entry name" value="Ribosomal_uS12_B"/>
    <property type="match status" value="1"/>
</dbReference>
<dbReference type="InterPro" id="IPR012340">
    <property type="entry name" value="NA-bd_OB-fold"/>
</dbReference>
<dbReference type="InterPro" id="IPR006032">
    <property type="entry name" value="Ribosomal_uS12"/>
</dbReference>
<dbReference type="InterPro" id="IPR005679">
    <property type="entry name" value="Ribosomal_uS12_bac"/>
</dbReference>
<dbReference type="NCBIfam" id="TIGR00981">
    <property type="entry name" value="rpsL_bact"/>
    <property type="match status" value="1"/>
</dbReference>
<dbReference type="PANTHER" id="PTHR11652">
    <property type="entry name" value="30S RIBOSOMAL PROTEIN S12 FAMILY MEMBER"/>
    <property type="match status" value="1"/>
</dbReference>
<dbReference type="Pfam" id="PF00164">
    <property type="entry name" value="Ribosom_S12_S23"/>
    <property type="match status" value="1"/>
</dbReference>
<dbReference type="PIRSF" id="PIRSF002133">
    <property type="entry name" value="Ribosomal_S12/S23"/>
    <property type="match status" value="1"/>
</dbReference>
<dbReference type="PRINTS" id="PR01034">
    <property type="entry name" value="RIBOSOMALS12"/>
</dbReference>
<dbReference type="SUPFAM" id="SSF50249">
    <property type="entry name" value="Nucleic acid-binding proteins"/>
    <property type="match status" value="1"/>
</dbReference>
<dbReference type="PROSITE" id="PS00055">
    <property type="entry name" value="RIBOSOMAL_S12"/>
    <property type="match status" value="1"/>
</dbReference>
<comment type="function">
    <text evidence="2">With S4 and S5 plays an important role in translational accuracy.</text>
</comment>
<comment type="function">
    <text evidence="2">Interacts with and stabilizes bases of the 16S rRNA that are involved in tRNA selection in the A site and with the mRNA backbone. Located at the interface of the 30S and 50S subunits, it traverses the body of the 30S subunit contacting proteins on the other side and probably holding the rRNA structure together. The combined cluster of proteins S8, S12 and S17 appears to hold together the shoulder and platform of the 30S subunit.</text>
</comment>
<comment type="subunit">
    <text evidence="2">Part of the 30S ribosomal subunit. Contacts proteins S8 and S17. May interact with IF1 in the 30S initiation complex.</text>
</comment>
<comment type="similarity">
    <text evidence="2">Belongs to the universal ribosomal protein uS12 family.</text>
</comment>